<evidence type="ECO:0000255" key="1">
    <source>
        <dbReference type="HAMAP-Rule" id="MF_00131"/>
    </source>
</evidence>
<sequence>MGVERIKAAFENGKKAFIPYVMGGDGGLEILKERIRFLDEAGASIVEIGIPFSDPVADGPTIQRAGKRALDSGVTVKGIFQALIEVRKEVQIPFVLMTYLNPVLAFGKERFIENCMEAGVDGIIVPDLPYEEQDIIAPLLREANIALIPLVTVTSPIERIKKITSESEGFVYAVTVAGVTGVRQNFKDEIHSYLEKVKSHTHLPVVAGFGISTKEHVEEMVTICDGVVVGSKVIELLENEKREEICEFIQATKQKEEA</sequence>
<organism>
    <name type="scientific">Bacillus anthracis (strain CDC 684 / NRRL 3495)</name>
    <dbReference type="NCBI Taxonomy" id="568206"/>
    <lineage>
        <taxon>Bacteria</taxon>
        <taxon>Bacillati</taxon>
        <taxon>Bacillota</taxon>
        <taxon>Bacilli</taxon>
        <taxon>Bacillales</taxon>
        <taxon>Bacillaceae</taxon>
        <taxon>Bacillus</taxon>
        <taxon>Bacillus cereus group</taxon>
    </lineage>
</organism>
<name>TRPA_BACAC</name>
<accession>C3LAV7</accession>
<protein>
    <recommendedName>
        <fullName evidence="1">Tryptophan synthase alpha chain</fullName>
        <ecNumber evidence="1">4.2.1.20</ecNumber>
    </recommendedName>
</protein>
<feature type="chain" id="PRO_1000198699" description="Tryptophan synthase alpha chain">
    <location>
        <begin position="1"/>
        <end position="258"/>
    </location>
</feature>
<feature type="active site" description="Proton acceptor" evidence="1">
    <location>
        <position position="47"/>
    </location>
</feature>
<feature type="active site" description="Proton acceptor" evidence="1">
    <location>
        <position position="58"/>
    </location>
</feature>
<dbReference type="EC" id="4.2.1.20" evidence="1"/>
<dbReference type="EMBL" id="CP001215">
    <property type="protein sequence ID" value="ACP13819.1"/>
    <property type="molecule type" value="Genomic_DNA"/>
</dbReference>
<dbReference type="RefSeq" id="WP_000537938.1">
    <property type="nucleotide sequence ID" value="NC_012581.1"/>
</dbReference>
<dbReference type="SMR" id="C3LAV7"/>
<dbReference type="GeneID" id="45021254"/>
<dbReference type="KEGG" id="bah:BAMEG_3336"/>
<dbReference type="HOGENOM" id="CLU_016734_0_0_9"/>
<dbReference type="UniPathway" id="UPA00035">
    <property type="reaction ID" value="UER00044"/>
</dbReference>
<dbReference type="GO" id="GO:0005829">
    <property type="term" value="C:cytosol"/>
    <property type="evidence" value="ECO:0007669"/>
    <property type="project" value="TreeGrafter"/>
</dbReference>
<dbReference type="GO" id="GO:0004834">
    <property type="term" value="F:tryptophan synthase activity"/>
    <property type="evidence" value="ECO:0007669"/>
    <property type="project" value="UniProtKB-UniRule"/>
</dbReference>
<dbReference type="CDD" id="cd04724">
    <property type="entry name" value="Tryptophan_synthase_alpha"/>
    <property type="match status" value="1"/>
</dbReference>
<dbReference type="FunFam" id="3.20.20.70:FF:000037">
    <property type="entry name" value="Tryptophan synthase alpha chain"/>
    <property type="match status" value="1"/>
</dbReference>
<dbReference type="Gene3D" id="3.20.20.70">
    <property type="entry name" value="Aldolase class I"/>
    <property type="match status" value="1"/>
</dbReference>
<dbReference type="HAMAP" id="MF_00131">
    <property type="entry name" value="Trp_synth_alpha"/>
    <property type="match status" value="1"/>
</dbReference>
<dbReference type="InterPro" id="IPR013785">
    <property type="entry name" value="Aldolase_TIM"/>
</dbReference>
<dbReference type="InterPro" id="IPR011060">
    <property type="entry name" value="RibuloseP-bd_barrel"/>
</dbReference>
<dbReference type="InterPro" id="IPR018204">
    <property type="entry name" value="Trp_synthase_alpha_AS"/>
</dbReference>
<dbReference type="InterPro" id="IPR002028">
    <property type="entry name" value="Trp_synthase_suA"/>
</dbReference>
<dbReference type="NCBIfam" id="TIGR00262">
    <property type="entry name" value="trpA"/>
    <property type="match status" value="1"/>
</dbReference>
<dbReference type="PANTHER" id="PTHR43406:SF1">
    <property type="entry name" value="TRYPTOPHAN SYNTHASE ALPHA CHAIN, CHLOROPLASTIC"/>
    <property type="match status" value="1"/>
</dbReference>
<dbReference type="PANTHER" id="PTHR43406">
    <property type="entry name" value="TRYPTOPHAN SYNTHASE, ALPHA CHAIN"/>
    <property type="match status" value="1"/>
</dbReference>
<dbReference type="Pfam" id="PF00290">
    <property type="entry name" value="Trp_syntA"/>
    <property type="match status" value="1"/>
</dbReference>
<dbReference type="SUPFAM" id="SSF51366">
    <property type="entry name" value="Ribulose-phoshate binding barrel"/>
    <property type="match status" value="1"/>
</dbReference>
<dbReference type="PROSITE" id="PS00167">
    <property type="entry name" value="TRP_SYNTHASE_ALPHA"/>
    <property type="match status" value="1"/>
</dbReference>
<keyword id="KW-0028">Amino-acid biosynthesis</keyword>
<keyword id="KW-0057">Aromatic amino acid biosynthesis</keyword>
<keyword id="KW-0456">Lyase</keyword>
<keyword id="KW-0822">Tryptophan biosynthesis</keyword>
<reference key="1">
    <citation type="submission" date="2008-10" db="EMBL/GenBank/DDBJ databases">
        <title>Genome sequence of Bacillus anthracis str. CDC 684.</title>
        <authorList>
            <person name="Dodson R.J."/>
            <person name="Munk A.C."/>
            <person name="Brettin T."/>
            <person name="Bruce D."/>
            <person name="Detter C."/>
            <person name="Tapia R."/>
            <person name="Han C."/>
            <person name="Sutton G."/>
            <person name="Sims D."/>
        </authorList>
    </citation>
    <scope>NUCLEOTIDE SEQUENCE [LARGE SCALE GENOMIC DNA]</scope>
    <source>
        <strain>CDC 684 / NRRL 3495</strain>
    </source>
</reference>
<proteinExistence type="inferred from homology"/>
<comment type="function">
    <text evidence="1">The alpha subunit is responsible for the aldol cleavage of indoleglycerol phosphate to indole and glyceraldehyde 3-phosphate.</text>
</comment>
<comment type="catalytic activity">
    <reaction evidence="1">
        <text>(1S,2R)-1-C-(indol-3-yl)glycerol 3-phosphate + L-serine = D-glyceraldehyde 3-phosphate + L-tryptophan + H2O</text>
        <dbReference type="Rhea" id="RHEA:10532"/>
        <dbReference type="ChEBI" id="CHEBI:15377"/>
        <dbReference type="ChEBI" id="CHEBI:33384"/>
        <dbReference type="ChEBI" id="CHEBI:57912"/>
        <dbReference type="ChEBI" id="CHEBI:58866"/>
        <dbReference type="ChEBI" id="CHEBI:59776"/>
        <dbReference type="EC" id="4.2.1.20"/>
    </reaction>
</comment>
<comment type="pathway">
    <text evidence="1">Amino-acid biosynthesis; L-tryptophan biosynthesis; L-tryptophan from chorismate: step 5/5.</text>
</comment>
<comment type="subunit">
    <text evidence="1">Tetramer of two alpha and two beta chains.</text>
</comment>
<comment type="similarity">
    <text evidence="1">Belongs to the TrpA family.</text>
</comment>
<gene>
    <name evidence="1" type="primary">trpA</name>
    <name type="ordered locus">BAMEG_3336</name>
</gene>